<reference key="1">
    <citation type="journal article" date="2004" name="J. Infect. Dis.">
        <title>Progress toward characterization of the group A Streptococcus metagenome: complete genome sequence of a macrolide-resistant serotype M6 strain.</title>
        <authorList>
            <person name="Banks D.J."/>
            <person name="Porcella S.F."/>
            <person name="Barbian K.D."/>
            <person name="Beres S.B."/>
            <person name="Philips L.E."/>
            <person name="Voyich J.M."/>
            <person name="DeLeo F.R."/>
            <person name="Martin J.M."/>
            <person name="Somerville G.A."/>
            <person name="Musser J.M."/>
        </authorList>
    </citation>
    <scope>NUCLEOTIDE SEQUENCE [LARGE SCALE GENOMIC DNA]</scope>
    <source>
        <strain>ATCC BAA-946 / MGAS10394</strain>
    </source>
</reference>
<name>Y1140_STRP6</name>
<evidence type="ECO:0000250" key="1"/>
<evidence type="ECO:0000250" key="2">
    <source>
        <dbReference type="UniProtKB" id="Q9X1H9"/>
    </source>
</evidence>
<evidence type="ECO:0000255" key="3">
    <source>
        <dbReference type="PROSITE-ProRule" id="PRU00815"/>
    </source>
</evidence>
<accession>Q5XAI8</accession>
<sequence>MTWKIVTDSGCDLRSLTRQSKELRFERVPLTLQIGTEIFRDDDGLDIDNMMTTMYQSSKATTSSCPSPEAFLQAYRGADNVIVMTITGTLSGSHNSARLAKNELLEENPNVNIHLIDSLSAGGEMDLLVLELERLINLGLSFEEVVKQITAYQQKTRLIFVLAKVDNLVKNGRLSKLVGKVIGLLNIRMVGKASNKGTLELLQKARGQKKAVSALIEEIQKEGYVGGKVYIAHAQNPKICEQISEKIKSLYPDAVIQTGRTSGLCSFYAEDGGLLMGYEI</sequence>
<gene>
    <name type="ordered locus">M6_Spy1440</name>
</gene>
<keyword id="KW-0446">Lipid-binding</keyword>
<comment type="function">
    <text evidence="1">May bind long-chain fatty acids, such as palmitate, and may play a role in lipid transport or fatty acid metabolism.</text>
</comment>
<organism>
    <name type="scientific">Streptococcus pyogenes serotype M6 (strain ATCC BAA-946 / MGAS10394)</name>
    <dbReference type="NCBI Taxonomy" id="286636"/>
    <lineage>
        <taxon>Bacteria</taxon>
        <taxon>Bacillati</taxon>
        <taxon>Bacillota</taxon>
        <taxon>Bacilli</taxon>
        <taxon>Lactobacillales</taxon>
        <taxon>Streptococcaceae</taxon>
        <taxon>Streptococcus</taxon>
    </lineage>
</organism>
<feature type="chain" id="PRO_0000209810" description="DegV domain-containing protein M6_Spy1440">
    <location>
        <begin position="1"/>
        <end position="280"/>
    </location>
</feature>
<feature type="domain" description="DegV" evidence="3">
    <location>
        <begin position="3"/>
        <end position="280"/>
    </location>
</feature>
<feature type="binding site" evidence="2">
    <location>
        <position position="63"/>
    </location>
    <ligand>
        <name>hexadecanoate</name>
        <dbReference type="ChEBI" id="CHEBI:7896"/>
    </ligand>
</feature>
<feature type="binding site" evidence="2">
    <location>
        <position position="91"/>
    </location>
    <ligand>
        <name>hexadecanoate</name>
        <dbReference type="ChEBI" id="CHEBI:7896"/>
    </ligand>
</feature>
<dbReference type="EMBL" id="CP000003">
    <property type="protein sequence ID" value="AAT87575.1"/>
    <property type="molecule type" value="Genomic_DNA"/>
</dbReference>
<dbReference type="RefSeq" id="WP_002988852.1">
    <property type="nucleotide sequence ID" value="NC_006086.1"/>
</dbReference>
<dbReference type="SMR" id="Q5XAI8"/>
<dbReference type="KEGG" id="spa:M6_Spy1440"/>
<dbReference type="HOGENOM" id="CLU_048251_2_0_9"/>
<dbReference type="Proteomes" id="UP000001167">
    <property type="component" value="Chromosome"/>
</dbReference>
<dbReference type="GO" id="GO:0008289">
    <property type="term" value="F:lipid binding"/>
    <property type="evidence" value="ECO:0007669"/>
    <property type="project" value="UniProtKB-KW"/>
</dbReference>
<dbReference type="Gene3D" id="3.30.1180.10">
    <property type="match status" value="1"/>
</dbReference>
<dbReference type="Gene3D" id="2.20.28.50">
    <property type="entry name" value="degv family protein"/>
    <property type="match status" value="1"/>
</dbReference>
<dbReference type="Gene3D" id="3.40.50.10440">
    <property type="entry name" value="Dihydroxyacetone kinase, domain 1"/>
    <property type="match status" value="1"/>
</dbReference>
<dbReference type="InterPro" id="IPR003797">
    <property type="entry name" value="DegV"/>
</dbReference>
<dbReference type="InterPro" id="IPR043168">
    <property type="entry name" value="DegV_C"/>
</dbReference>
<dbReference type="InterPro" id="IPR050270">
    <property type="entry name" value="DegV_domain_contain"/>
</dbReference>
<dbReference type="NCBIfam" id="TIGR00762">
    <property type="entry name" value="DegV"/>
    <property type="match status" value="1"/>
</dbReference>
<dbReference type="PANTHER" id="PTHR33434">
    <property type="entry name" value="DEGV DOMAIN-CONTAINING PROTEIN DR_1986-RELATED"/>
    <property type="match status" value="1"/>
</dbReference>
<dbReference type="PANTHER" id="PTHR33434:SF2">
    <property type="entry name" value="FATTY ACID-BINDING PROTEIN TM_1468"/>
    <property type="match status" value="1"/>
</dbReference>
<dbReference type="Pfam" id="PF02645">
    <property type="entry name" value="DegV"/>
    <property type="match status" value="1"/>
</dbReference>
<dbReference type="SUPFAM" id="SSF82549">
    <property type="entry name" value="DAK1/DegV-like"/>
    <property type="match status" value="1"/>
</dbReference>
<dbReference type="PROSITE" id="PS51482">
    <property type="entry name" value="DEGV"/>
    <property type="match status" value="1"/>
</dbReference>
<protein>
    <recommendedName>
        <fullName>DegV domain-containing protein M6_Spy1440</fullName>
    </recommendedName>
</protein>
<proteinExistence type="inferred from homology"/>